<dbReference type="EMBL" id="Z14954">
    <property type="protein sequence ID" value="CAA78679.1"/>
    <property type="molecule type" value="mRNA"/>
</dbReference>
<dbReference type="EMBL" id="Z29574">
    <property type="protein sequence ID" value="CAA82690.1"/>
    <property type="molecule type" value="Genomic_DNA"/>
</dbReference>
<dbReference type="EMBL" id="Z29575">
    <property type="protein sequence ID" value="CAA82691.1"/>
    <property type="molecule type" value="mRNA"/>
</dbReference>
<dbReference type="EMBL" id="AB052772">
    <property type="protein sequence ID" value="BAB60895.1"/>
    <property type="molecule type" value="Genomic_DNA"/>
</dbReference>
<dbReference type="EMBL" id="EF152355">
    <property type="protein sequence ID" value="ABN42510.1"/>
    <property type="molecule type" value="mRNA"/>
</dbReference>
<dbReference type="EMBL" id="AY684975">
    <property type="protein sequence ID" value="AAV92616.1"/>
    <property type="molecule type" value="mRNA"/>
</dbReference>
<dbReference type="EMBL" id="AY509112">
    <property type="protein sequence ID" value="AAR84240.1"/>
    <property type="molecule type" value="Genomic_DNA"/>
</dbReference>
<dbReference type="EMBL" id="U95742">
    <property type="protein sequence ID" value="AAB67251.1"/>
    <property type="molecule type" value="Genomic_DNA"/>
</dbReference>
<dbReference type="EMBL" id="AC007216">
    <property type="status" value="NOT_ANNOTATED_CDS"/>
    <property type="molecule type" value="Genomic_DNA"/>
</dbReference>
<dbReference type="CCDS" id="CCDS10552.1">
    <molecule id="Q02223-1"/>
</dbReference>
<dbReference type="PIR" id="S43486">
    <property type="entry name" value="S43486"/>
</dbReference>
<dbReference type="RefSeq" id="NP_001183.2">
    <molecule id="Q02223-1"/>
    <property type="nucleotide sequence ID" value="NM_001192.2"/>
</dbReference>
<dbReference type="PDB" id="1OQD">
    <property type="method" value="X-ray"/>
    <property type="resolution" value="2.60 A"/>
    <property type="chains" value="K/L/M/N/O/P/Q/R=8-46"/>
</dbReference>
<dbReference type="PDB" id="1XU2">
    <property type="method" value="X-ray"/>
    <property type="resolution" value="2.35 A"/>
    <property type="chains" value="R/S/T=5-51"/>
</dbReference>
<dbReference type="PDB" id="2KN1">
    <property type="method" value="NMR"/>
    <property type="chains" value="A=2-50"/>
</dbReference>
<dbReference type="PDB" id="4ZFO">
    <property type="method" value="X-ray"/>
    <property type="resolution" value="1.90 A"/>
    <property type="chains" value="F/K=1-54"/>
</dbReference>
<dbReference type="PDB" id="6J7W">
    <property type="method" value="X-ray"/>
    <property type="resolution" value="2.60 A"/>
    <property type="chains" value="C/D=6-44"/>
</dbReference>
<dbReference type="PDB" id="8HXQ">
    <property type="method" value="X-ray"/>
    <property type="resolution" value="2.40 A"/>
    <property type="chains" value="C/D=1-54"/>
</dbReference>
<dbReference type="PDB" id="8HXR">
    <property type="method" value="X-ray"/>
    <property type="resolution" value="2.70 A"/>
    <property type="chains" value="C/D=1-54"/>
</dbReference>
<dbReference type="PDB" id="8QY9">
    <property type="method" value="X-ray"/>
    <property type="resolution" value="3.10 A"/>
    <property type="chains" value="A=7-41"/>
</dbReference>
<dbReference type="PDB" id="8QYA">
    <property type="method" value="X-ray"/>
    <property type="resolution" value="2.72 A"/>
    <property type="chains" value="A=6-41"/>
</dbReference>
<dbReference type="PDB" id="8QYB">
    <property type="method" value="X-ray"/>
    <property type="resolution" value="3.09 A"/>
    <property type="chains" value="A=7-41"/>
</dbReference>
<dbReference type="PDBsum" id="1OQD"/>
<dbReference type="PDBsum" id="1XU2"/>
<dbReference type="PDBsum" id="2KN1"/>
<dbReference type="PDBsum" id="4ZFO"/>
<dbReference type="PDBsum" id="6J7W"/>
<dbReference type="PDBsum" id="8HXQ"/>
<dbReference type="PDBsum" id="8HXR"/>
<dbReference type="PDBsum" id="8QY9"/>
<dbReference type="PDBsum" id="8QYA"/>
<dbReference type="PDBsum" id="8QYB"/>
<dbReference type="BMRB" id="Q02223"/>
<dbReference type="SASBDB" id="Q02223"/>
<dbReference type="SMR" id="Q02223"/>
<dbReference type="BioGRID" id="107080">
    <property type="interactions" value="26"/>
</dbReference>
<dbReference type="CORUM" id="Q02223"/>
<dbReference type="FunCoup" id="Q02223">
    <property type="interactions" value="724"/>
</dbReference>
<dbReference type="IntAct" id="Q02223">
    <property type="interactions" value="20"/>
</dbReference>
<dbReference type="STRING" id="9606.ENSP00000053243"/>
<dbReference type="ChEMBL" id="CHEMBL4523587"/>
<dbReference type="DrugBank" id="DB15719">
    <property type="generic name" value="Belantamab mafodotin"/>
</dbReference>
<dbReference type="DrugBank" id="DB16738">
    <property type="generic name" value="Ciltacabtagene autoleucel"/>
</dbReference>
<dbReference type="DrugBank" id="DB15395">
    <property type="generic name" value="Elranatamab"/>
</dbReference>
<dbReference type="DrugBank" id="DB16665">
    <property type="generic name" value="Idecabtagene vicleucel"/>
</dbReference>
<dbReference type="DrugBank" id="DB16655">
    <property type="generic name" value="Teclistamab"/>
</dbReference>
<dbReference type="DrugCentral" id="Q02223"/>
<dbReference type="GuidetoPHARMACOLOGY" id="1889"/>
<dbReference type="GlyConnect" id="2978">
    <property type="glycosylation" value="10 N-Linked glycans (1 site)"/>
</dbReference>
<dbReference type="GlyGen" id="Q02223">
    <property type="glycosylation" value="1 site, 13 N-linked glycans (1 site)"/>
</dbReference>
<dbReference type="iPTMnet" id="Q02223"/>
<dbReference type="PhosphoSitePlus" id="Q02223"/>
<dbReference type="BioMuta" id="TNFRSF17"/>
<dbReference type="DMDM" id="313104029"/>
<dbReference type="CPTAC" id="CPTAC-5934"/>
<dbReference type="CPTAC" id="CPTAC-5935"/>
<dbReference type="CPTAC" id="CPTAC-5971"/>
<dbReference type="CPTAC" id="CPTAC-5972"/>
<dbReference type="jPOST" id="Q02223"/>
<dbReference type="MassIVE" id="Q02223"/>
<dbReference type="PaxDb" id="9606-ENSP00000053243"/>
<dbReference type="PeptideAtlas" id="Q02223"/>
<dbReference type="ProteomicsDB" id="58062">
    <molecule id="Q02223-1"/>
</dbReference>
<dbReference type="ProteomicsDB" id="61498"/>
<dbReference type="ABCD" id="Q02223">
    <property type="antibodies" value="260 sequenced antibodies"/>
</dbReference>
<dbReference type="Antibodypedia" id="11568">
    <property type="antibodies" value="1010 antibodies from 44 providers"/>
</dbReference>
<dbReference type="CPTC" id="Q02223">
    <property type="antibodies" value="1 antibody"/>
</dbReference>
<dbReference type="DNASU" id="608"/>
<dbReference type="Ensembl" id="ENST00000053243.6">
    <molecule id="Q02223-1"/>
    <property type="protein sequence ID" value="ENSP00000053243.1"/>
    <property type="gene ID" value="ENSG00000048462.11"/>
</dbReference>
<dbReference type="Ensembl" id="ENST00000396495.3">
    <molecule id="Q02223-2"/>
    <property type="protein sequence ID" value="ENSP00000379753.3"/>
    <property type="gene ID" value="ENSG00000048462.11"/>
</dbReference>
<dbReference type="GeneID" id="608"/>
<dbReference type="KEGG" id="hsa:608"/>
<dbReference type="MANE-Select" id="ENST00000053243.6">
    <property type="protein sequence ID" value="ENSP00000053243.1"/>
    <property type="RefSeq nucleotide sequence ID" value="NM_001192.3"/>
    <property type="RefSeq protein sequence ID" value="NP_001183.2"/>
</dbReference>
<dbReference type="UCSC" id="uc002dbv.3">
    <molecule id="Q02223-1"/>
    <property type="organism name" value="human"/>
</dbReference>
<dbReference type="AGR" id="HGNC:11913"/>
<dbReference type="CTD" id="608"/>
<dbReference type="DisGeNET" id="608"/>
<dbReference type="GeneCards" id="TNFRSF17"/>
<dbReference type="HGNC" id="HGNC:11913">
    <property type="gene designation" value="TNFRSF17"/>
</dbReference>
<dbReference type="HPA" id="ENSG00000048462">
    <property type="expression patterns" value="Tissue enhanced (intestine, lymphoid tissue, stomach)"/>
</dbReference>
<dbReference type="MalaCards" id="TNFRSF17"/>
<dbReference type="MIM" id="109545">
    <property type="type" value="gene"/>
</dbReference>
<dbReference type="neXtProt" id="NX_Q02223"/>
<dbReference type="OpenTargets" id="ENSG00000048462"/>
<dbReference type="PharmGKB" id="PA36606"/>
<dbReference type="VEuPathDB" id="HostDB:ENSG00000048462"/>
<dbReference type="eggNOG" id="ENOG502SF2N">
    <property type="taxonomic scope" value="Eukaryota"/>
</dbReference>
<dbReference type="GeneTree" id="ENSGT00940000154485"/>
<dbReference type="HOGENOM" id="CLU_131588_0_0_1"/>
<dbReference type="InParanoid" id="Q02223"/>
<dbReference type="OMA" id="CHLRCSN"/>
<dbReference type="OrthoDB" id="9894478at2759"/>
<dbReference type="PAN-GO" id="Q02223">
    <property type="GO annotations" value="0 GO annotations based on evolutionary models"/>
</dbReference>
<dbReference type="PhylomeDB" id="Q02223"/>
<dbReference type="TreeFam" id="TF337842"/>
<dbReference type="PathwayCommons" id="Q02223"/>
<dbReference type="Reactome" id="R-HSA-5669034">
    <property type="pathway name" value="TNFs bind their physiological receptors"/>
</dbReference>
<dbReference type="SignaLink" id="Q02223"/>
<dbReference type="SIGNOR" id="Q02223"/>
<dbReference type="BioGRID-ORCS" id="608">
    <property type="hits" value="12 hits in 1149 CRISPR screens"/>
</dbReference>
<dbReference type="ChiTaRS" id="TNFRSF17">
    <property type="organism name" value="human"/>
</dbReference>
<dbReference type="EvolutionaryTrace" id="Q02223"/>
<dbReference type="GeneWiki" id="TNFRSF17"/>
<dbReference type="GenomeRNAi" id="608"/>
<dbReference type="Pharos" id="Q02223">
    <property type="development level" value="Tclin"/>
</dbReference>
<dbReference type="PRO" id="PR:Q02223"/>
<dbReference type="Proteomes" id="UP000005640">
    <property type="component" value="Chromosome 16"/>
</dbReference>
<dbReference type="RNAct" id="Q02223">
    <property type="molecule type" value="protein"/>
</dbReference>
<dbReference type="Bgee" id="ENSG00000048462">
    <property type="expression patterns" value="Expressed in rectum and 118 other cell types or tissues"/>
</dbReference>
<dbReference type="ExpressionAtlas" id="Q02223">
    <property type="expression patterns" value="baseline and differential"/>
</dbReference>
<dbReference type="GO" id="GO:0012505">
    <property type="term" value="C:endomembrane system"/>
    <property type="evidence" value="ECO:0007669"/>
    <property type="project" value="UniProtKB-SubCell"/>
</dbReference>
<dbReference type="GO" id="GO:0016020">
    <property type="term" value="C:membrane"/>
    <property type="evidence" value="ECO:0000304"/>
    <property type="project" value="ProtInc"/>
</dbReference>
<dbReference type="GO" id="GO:0005886">
    <property type="term" value="C:plasma membrane"/>
    <property type="evidence" value="ECO:0000304"/>
    <property type="project" value="Reactome"/>
</dbReference>
<dbReference type="GO" id="GO:0038023">
    <property type="term" value="F:signaling receptor activity"/>
    <property type="evidence" value="ECO:0000304"/>
    <property type="project" value="ProtInc"/>
</dbReference>
<dbReference type="GO" id="GO:0002250">
    <property type="term" value="P:adaptive immune response"/>
    <property type="evidence" value="ECO:0007669"/>
    <property type="project" value="UniProtKB-KW"/>
</dbReference>
<dbReference type="GO" id="GO:0002260">
    <property type="term" value="P:lymphocyte homeostasis"/>
    <property type="evidence" value="ECO:0007669"/>
    <property type="project" value="Ensembl"/>
</dbReference>
<dbReference type="GO" id="GO:0007165">
    <property type="term" value="P:signal transduction"/>
    <property type="evidence" value="ECO:0000304"/>
    <property type="project" value="ProtInc"/>
</dbReference>
<dbReference type="GO" id="GO:0033209">
    <property type="term" value="P:tumor necrosis factor-mediated signaling pathway"/>
    <property type="evidence" value="ECO:0007669"/>
    <property type="project" value="InterPro"/>
</dbReference>
<dbReference type="CDD" id="cd13414">
    <property type="entry name" value="TNFRSF17"/>
    <property type="match status" value="1"/>
</dbReference>
<dbReference type="FunFam" id="4.10.1290.10:FF:000003">
    <property type="entry name" value="Tumor necrosis factor receptor superfamily member 17"/>
    <property type="match status" value="1"/>
</dbReference>
<dbReference type="Gene3D" id="4.10.1290.10">
    <property type="entry name" value="Tumor necrosis factor receptor superfamily"/>
    <property type="match status" value="1"/>
</dbReference>
<dbReference type="InterPro" id="IPR015337">
    <property type="entry name" value="BCMA_Tall-1-bd"/>
</dbReference>
<dbReference type="InterPro" id="IPR043521">
    <property type="entry name" value="TNFR_13C/17"/>
</dbReference>
<dbReference type="InterPro" id="IPR022320">
    <property type="entry name" value="TNFR_17"/>
</dbReference>
<dbReference type="PANTHER" id="PTHR20437">
    <property type="entry name" value="TUMOR NECROSIS FACTOR RECEPTOR SUBFAMILY MEMBER 13/17"/>
    <property type="match status" value="1"/>
</dbReference>
<dbReference type="PANTHER" id="PTHR20437:SF0">
    <property type="entry name" value="TUMOR NECROSIS FACTOR RECEPTOR SUPERFAMILY MEMBER 17"/>
    <property type="match status" value="1"/>
</dbReference>
<dbReference type="Pfam" id="PF09257">
    <property type="entry name" value="BCMA-Tall_bind"/>
    <property type="match status" value="1"/>
</dbReference>
<dbReference type="PIRSF" id="PIRSF011859">
    <property type="entry name" value="BCMA_Tall-1_bd"/>
    <property type="match status" value="1"/>
</dbReference>
<dbReference type="PRINTS" id="PR01967">
    <property type="entry name" value="TNFACTORR17"/>
</dbReference>
<dbReference type="SUPFAM" id="SSF57586">
    <property type="entry name" value="TNF receptor-like"/>
    <property type="match status" value="1"/>
</dbReference>
<accession>Q02223</accession>
<accession>Q2TQ40</accession>
<sequence length="184" mass="20165">MLQMAGQCSQNEYFDSLLHACIPCQLRCSSNTPPLTCQRYCNASVTNSVKGTNAILWTCLGLSLIISLAVFVLMFLLRKINSEPLKDEFKNTGSGLLGMANIDLEKSRTGDEIILPRGLEYTVEECTCEDCIKSKPKVDSDHCFPLPAMEEGATILVTTKTNDYCKSLPAALSATEIEKSISAR</sequence>
<keyword id="KW-0002">3D-structure</keyword>
<keyword id="KW-1064">Adaptive immunity</keyword>
<keyword id="KW-0025">Alternative splicing</keyword>
<keyword id="KW-1003">Cell membrane</keyword>
<keyword id="KW-0160">Chromosomal rearrangement</keyword>
<keyword id="KW-1015">Disulfide bond</keyword>
<keyword id="KW-0391">Immunity</keyword>
<keyword id="KW-0472">Membrane</keyword>
<keyword id="KW-1267">Proteomics identification</keyword>
<keyword id="KW-0656">Proto-oncogene</keyword>
<keyword id="KW-0675">Receptor</keyword>
<keyword id="KW-1185">Reference proteome</keyword>
<keyword id="KW-0735">Signal-anchor</keyword>
<keyword id="KW-0812">Transmembrane</keyword>
<keyword id="KW-1133">Transmembrane helix</keyword>
<name>TNR17_HUMAN</name>
<evidence type="ECO:0000255" key="1"/>
<evidence type="ECO:0000269" key="2">
    <source>
    </source>
</evidence>
<evidence type="ECO:0000269" key="3">
    <source>
    </source>
</evidence>
<evidence type="ECO:0000269" key="4">
    <source>
    </source>
</evidence>
<evidence type="ECO:0000269" key="5">
    <source>
    </source>
</evidence>
<evidence type="ECO:0000269" key="6">
    <source>
    </source>
</evidence>
<evidence type="ECO:0000269" key="7">
    <source>
    </source>
</evidence>
<evidence type="ECO:0000269" key="8">
    <source>
    </source>
</evidence>
<evidence type="ECO:0000269" key="9">
    <source>
    </source>
</evidence>
<evidence type="ECO:0000269" key="10">
    <source>
    </source>
</evidence>
<evidence type="ECO:0000269" key="11">
    <source ref="6"/>
</evidence>
<evidence type="ECO:0000303" key="12">
    <source>
    </source>
</evidence>
<evidence type="ECO:0000303" key="13">
    <source ref="5"/>
</evidence>
<evidence type="ECO:0000305" key="14"/>
<evidence type="ECO:0007829" key="15">
    <source>
        <dbReference type="PDB" id="2KN1"/>
    </source>
</evidence>
<evidence type="ECO:0007829" key="16">
    <source>
        <dbReference type="PDB" id="4ZFO"/>
    </source>
</evidence>
<organism>
    <name type="scientific">Homo sapiens</name>
    <name type="common">Human</name>
    <dbReference type="NCBI Taxonomy" id="9606"/>
    <lineage>
        <taxon>Eukaryota</taxon>
        <taxon>Metazoa</taxon>
        <taxon>Chordata</taxon>
        <taxon>Craniata</taxon>
        <taxon>Vertebrata</taxon>
        <taxon>Euteleostomi</taxon>
        <taxon>Mammalia</taxon>
        <taxon>Eutheria</taxon>
        <taxon>Euarchontoglires</taxon>
        <taxon>Primates</taxon>
        <taxon>Haplorrhini</taxon>
        <taxon>Catarrhini</taxon>
        <taxon>Hominidae</taxon>
        <taxon>Homo</taxon>
    </lineage>
</organism>
<protein>
    <recommendedName>
        <fullName>Tumor necrosis factor receptor superfamily member 17</fullName>
    </recommendedName>
    <alternativeName>
        <fullName>B-cell maturation protein</fullName>
    </alternativeName>
    <cdAntigenName>CD269</cdAntigenName>
</protein>
<gene>
    <name type="primary">TNFRSF17</name>
    <name type="synonym">BCM</name>
    <name type="synonym">BCMA</name>
</gene>
<feature type="chain" id="PRO_0000058935" description="Tumor necrosis factor receptor superfamily member 17">
    <location>
        <begin position="1"/>
        <end position="184"/>
    </location>
</feature>
<feature type="topological domain" description="Extracellular" evidence="1">
    <location>
        <begin position="1"/>
        <end position="54"/>
    </location>
</feature>
<feature type="transmembrane region" description="Helical; Signal-anchor for type III membrane protein" evidence="1">
    <location>
        <begin position="55"/>
        <end position="77"/>
    </location>
</feature>
<feature type="topological domain" description="Cytoplasmic" evidence="1">
    <location>
        <begin position="78"/>
        <end position="184"/>
    </location>
</feature>
<feature type="repeat" description="TNFR-Cys">
    <location>
        <begin position="7"/>
        <end position="41"/>
    </location>
</feature>
<feature type="site" description="Breakpoint for translocation to form IL2/TNFRSF17 oncogene">
    <location>
        <begin position="3"/>
        <end position="4"/>
    </location>
</feature>
<feature type="disulfide bond" evidence="7 9">
    <location>
        <begin position="8"/>
        <end position="21"/>
    </location>
</feature>
<feature type="disulfide bond" evidence="7 9">
    <location>
        <begin position="24"/>
        <end position="37"/>
    </location>
</feature>
<feature type="disulfide bond" evidence="7 9">
    <location>
        <begin position="28"/>
        <end position="41"/>
    </location>
</feature>
<feature type="splice variant" id="VSP_047678" description="In isoform 2." evidence="12 13">
    <original>SVTNSVKGTNAILWTCLGLSLIISLAVFVLMFLLRKINSEPLKDEFKNTG</original>
    <variation>R</variation>
    <location>
        <begin position="44"/>
        <end position="93"/>
    </location>
</feature>
<feature type="sequence variant" id="VAR_018755" description="In dbSNP:rs11570146." evidence="11">
    <original>A</original>
    <variation>V</variation>
    <location>
        <position position="54"/>
    </location>
</feature>
<feature type="sequence variant" id="VAR_018756" description="In dbSNP:rs11570147." evidence="11">
    <original>I</original>
    <variation>V</variation>
    <location>
        <position position="65"/>
    </location>
</feature>
<feature type="sequence variant" id="VAR_018757" description="In dbSNP:rs11570148." evidence="11">
    <original>F</original>
    <variation>V</variation>
    <location>
        <position position="75"/>
    </location>
</feature>
<feature type="sequence variant" id="VAR_018758" description="In dbSNP:rs373496." evidence="2 6 8 10 11">
    <original>N</original>
    <variation>S</variation>
    <location>
        <position position="81"/>
    </location>
</feature>
<feature type="sequence variant" id="VAR_012234" description="In dbSNP:rs150352299." evidence="6">
    <original>A</original>
    <variation>T</variation>
    <location>
        <position position="153"/>
    </location>
</feature>
<feature type="sequence variant" id="VAR_018759" description="In dbSNP:rs11570159." evidence="11">
    <original>C</original>
    <variation>S</variation>
    <location>
        <position position="165"/>
    </location>
</feature>
<feature type="sequence variant" id="VAR_061855" description="In dbSNP:rs34546237.">
    <original>E</original>
    <variation>D</variation>
    <location>
        <position position="176"/>
    </location>
</feature>
<feature type="strand" evidence="16">
    <location>
        <begin position="12"/>
        <end position="15"/>
    </location>
</feature>
<feature type="turn" evidence="16">
    <location>
        <begin position="16"/>
        <end position="19"/>
    </location>
</feature>
<feature type="strand" evidence="16">
    <location>
        <begin position="20"/>
        <end position="23"/>
    </location>
</feature>
<feature type="helix" evidence="16">
    <location>
        <begin position="24"/>
        <end position="27"/>
    </location>
</feature>
<feature type="strand" evidence="16">
    <location>
        <begin position="30"/>
        <end position="32"/>
    </location>
</feature>
<feature type="helix" evidence="16">
    <location>
        <begin position="35"/>
        <end position="37"/>
    </location>
</feature>
<feature type="turn" evidence="16">
    <location>
        <begin position="38"/>
        <end position="40"/>
    </location>
</feature>
<feature type="turn" evidence="15">
    <location>
        <begin position="42"/>
        <end position="44"/>
    </location>
</feature>
<reference key="1">
    <citation type="journal article" date="1992" name="EMBO J.">
        <title>A new gene, BCM, on chromosome 16 is fused to the interleukin 2 gene by a t(4;16)(q26;p13) translocation in a malignant T cell lymphoma.</title>
        <authorList>
            <person name="Laabi Y."/>
            <person name="Gras M.P."/>
            <person name="Carbonnel F."/>
            <person name="Brouet J.C."/>
            <person name="Berger R."/>
            <person name="Larsen C.-J."/>
            <person name="Tsapis A."/>
        </authorList>
    </citation>
    <scope>NUCLEOTIDE SEQUENCE [MRNA] (ISOFORM 1)</scope>
    <scope>CHROMOSOMAL TRANSLOCATION</scope>
    <scope>VARIANT SER-81</scope>
    <source>
        <tissue>Lymph node</tissue>
        <tissue>Peripheral blood leukocyte</tissue>
    </source>
</reference>
<reference key="2">
    <citation type="journal article" date="1994" name="Nucleic Acids Res.">
        <title>The BCMA gene, preferentially expressed during B lymphoid maturation, is bidirectionally transcribed.</title>
        <authorList>
            <person name="Laabi Y."/>
            <person name="Gras M.P."/>
            <person name="Brouet J.C."/>
            <person name="Berger R."/>
            <person name="Larsen C.J."/>
            <person name="Tsapis A."/>
        </authorList>
    </citation>
    <scope>NUCLEOTIDE SEQUENCE [GENOMIC DNA / MRNA] (ISOFORM 1)</scope>
    <scope>VARIANT SER-81</scope>
</reference>
<reference key="3">
    <citation type="journal article" date="2001" name="Genes Immun.">
        <title>Presence of four major haplotypes in human BCMA gene: lack of association with systemic lupus erythematosus and rheumatoid arthritis.</title>
        <authorList>
            <person name="Kawasaki A."/>
            <person name="Tsuchiya N."/>
            <person name="Fukazawa T."/>
            <person name="Hashimoto H."/>
            <person name="Tokunaga K."/>
        </authorList>
    </citation>
    <scope>NUCLEOTIDE SEQUENCE [GENOMIC DNA]</scope>
    <scope>VARIANTS SER-81 AND THR-153</scope>
</reference>
<reference key="4">
    <citation type="journal article" date="2008" name="Mol. Immunol.">
        <title>Identification of new splice variants of the genes BAFF and BCMA.</title>
        <authorList>
            <person name="Smirnova A.S."/>
            <person name="Andrade-Oliveira V."/>
            <person name="Gerbase-DeLima M."/>
        </authorList>
    </citation>
    <scope>NUCLEOTIDE SEQUENCE [MRNA] (ISOFORM 2)</scope>
    <source>
        <tissue>Peripheral blood</tissue>
    </source>
</reference>
<reference key="5">
    <citation type="submission" date="2004-07" db="EMBL/GenBank/DDBJ databases">
        <title>Novel, secreted isoform of human tumor necrosis factor receptor superfamily, member 17 (TNFRSF17).</title>
        <authorList>
            <person name="Maia S."/>
            <person name="Freeman G.J."/>
            <person name="Nadler L.M."/>
            <person name="Cardoso A.A."/>
        </authorList>
    </citation>
    <scope>NUCLEOTIDE SEQUENCE [MRNA] (ISOFORM 2)</scope>
</reference>
<reference key="6">
    <citation type="submission" date="2003-12" db="EMBL/GenBank/DDBJ databases">
        <authorList>
            <consortium name="NIEHS SNPs program"/>
        </authorList>
    </citation>
    <scope>NUCLEOTIDE SEQUENCE [GENOMIC DNA]</scope>
    <scope>VARIANTS VAL-54; VAL-65; VAL-75; SER-81 AND SER-165</scope>
</reference>
<reference key="7">
    <citation type="journal article" date="1999" name="Genomics">
        <title>Genome duplications and other features in 12 Mb of DNA sequence from human chromosome 16p and 16q.</title>
        <authorList>
            <person name="Loftus B.J."/>
            <person name="Kim U.-J."/>
            <person name="Sneddon V.P."/>
            <person name="Kalush F."/>
            <person name="Brandon R."/>
            <person name="Fuhrmann J."/>
            <person name="Mason T."/>
            <person name="Crosby M.L."/>
            <person name="Barnstead M."/>
            <person name="Cronin L."/>
            <person name="Mays A.D."/>
            <person name="Cao Y."/>
            <person name="Xu R.X."/>
            <person name="Kang H.-L."/>
            <person name="Mitchell S."/>
            <person name="Eichler E.E."/>
            <person name="Harris P.C."/>
            <person name="Venter J.C."/>
            <person name="Adams M.D."/>
        </authorList>
    </citation>
    <scope>NUCLEOTIDE SEQUENCE [LARGE SCALE GENOMIC DNA]</scope>
    <scope>VARIANT SER-81</scope>
</reference>
<reference key="8">
    <citation type="journal article" date="2004" name="Nature">
        <title>The sequence and analysis of duplication-rich human chromosome 16.</title>
        <authorList>
            <person name="Martin J."/>
            <person name="Han C."/>
            <person name="Gordon L.A."/>
            <person name="Terry A."/>
            <person name="Prabhakar S."/>
            <person name="She X."/>
            <person name="Xie G."/>
            <person name="Hellsten U."/>
            <person name="Chan Y.M."/>
            <person name="Altherr M."/>
            <person name="Couronne O."/>
            <person name="Aerts A."/>
            <person name="Bajorek E."/>
            <person name="Black S."/>
            <person name="Blumer H."/>
            <person name="Branscomb E."/>
            <person name="Brown N.C."/>
            <person name="Bruno W.J."/>
            <person name="Buckingham J.M."/>
            <person name="Callen D.F."/>
            <person name="Campbell C.S."/>
            <person name="Campbell M.L."/>
            <person name="Campbell E.W."/>
            <person name="Caoile C."/>
            <person name="Challacombe J.F."/>
            <person name="Chasteen L.A."/>
            <person name="Chertkov O."/>
            <person name="Chi H.C."/>
            <person name="Christensen M."/>
            <person name="Clark L.M."/>
            <person name="Cohn J.D."/>
            <person name="Denys M."/>
            <person name="Detter J.C."/>
            <person name="Dickson M."/>
            <person name="Dimitrijevic-Bussod M."/>
            <person name="Escobar J."/>
            <person name="Fawcett J.J."/>
            <person name="Flowers D."/>
            <person name="Fotopulos D."/>
            <person name="Glavina T."/>
            <person name="Gomez M."/>
            <person name="Gonzales E."/>
            <person name="Goodstein D."/>
            <person name="Goodwin L.A."/>
            <person name="Grady D.L."/>
            <person name="Grigoriev I."/>
            <person name="Groza M."/>
            <person name="Hammon N."/>
            <person name="Hawkins T."/>
            <person name="Haydu L."/>
            <person name="Hildebrand C.E."/>
            <person name="Huang W."/>
            <person name="Israni S."/>
            <person name="Jett J."/>
            <person name="Jewett P.B."/>
            <person name="Kadner K."/>
            <person name="Kimball H."/>
            <person name="Kobayashi A."/>
            <person name="Krawczyk M.-C."/>
            <person name="Leyba T."/>
            <person name="Longmire J.L."/>
            <person name="Lopez F."/>
            <person name="Lou Y."/>
            <person name="Lowry S."/>
            <person name="Ludeman T."/>
            <person name="Manohar C.F."/>
            <person name="Mark G.A."/>
            <person name="McMurray K.L."/>
            <person name="Meincke L.J."/>
            <person name="Morgan J."/>
            <person name="Moyzis R.K."/>
            <person name="Mundt M.O."/>
            <person name="Munk A.C."/>
            <person name="Nandkeshwar R.D."/>
            <person name="Pitluck S."/>
            <person name="Pollard M."/>
            <person name="Predki P."/>
            <person name="Parson-Quintana B."/>
            <person name="Ramirez L."/>
            <person name="Rash S."/>
            <person name="Retterer J."/>
            <person name="Ricke D.O."/>
            <person name="Robinson D.L."/>
            <person name="Rodriguez A."/>
            <person name="Salamov A."/>
            <person name="Saunders E.H."/>
            <person name="Scott D."/>
            <person name="Shough T."/>
            <person name="Stallings R.L."/>
            <person name="Stalvey M."/>
            <person name="Sutherland R.D."/>
            <person name="Tapia R."/>
            <person name="Tesmer J.G."/>
            <person name="Thayer N."/>
            <person name="Thompson L.S."/>
            <person name="Tice H."/>
            <person name="Torney D.C."/>
            <person name="Tran-Gyamfi M."/>
            <person name="Tsai M."/>
            <person name="Ulanovsky L.E."/>
            <person name="Ustaszewska A."/>
            <person name="Vo N."/>
            <person name="White P.S."/>
            <person name="Williams A.L."/>
            <person name="Wills P.L."/>
            <person name="Wu J.-R."/>
            <person name="Wu K."/>
            <person name="Yang J."/>
            <person name="DeJong P."/>
            <person name="Bruce D."/>
            <person name="Doggett N.A."/>
            <person name="Deaven L."/>
            <person name="Schmutz J."/>
            <person name="Grimwood J."/>
            <person name="Richardson P."/>
            <person name="Rokhsar D.S."/>
            <person name="Eichler E.E."/>
            <person name="Gilna P."/>
            <person name="Lucas S.M."/>
            <person name="Myers R.M."/>
            <person name="Rubin E.M."/>
            <person name="Pennacchio L.A."/>
        </authorList>
    </citation>
    <scope>NUCLEOTIDE SEQUENCE [LARGE SCALE GENOMIC DNA]</scope>
</reference>
<reference key="9">
    <citation type="journal article" date="2000" name="J. Immunol.">
        <title>TNF receptor family member BCMA (B cell maturation) associates with TNF receptor-associated factor (TRAF) 1, TRAF2, and TRAF3 and activates NF-kappa B, elk-1, c-Jun N-terminal kinase, and p38 mitogen-activated protein kinase.</title>
        <authorList>
            <person name="Hatzoglou A."/>
            <person name="Roussel J."/>
            <person name="Bourgeade M.-F."/>
            <person name="Rogier E."/>
            <person name="Madry C."/>
            <person name="Inoue J."/>
            <person name="Devergne O."/>
            <person name="Tsapis A."/>
        </authorList>
    </citation>
    <scope>FUNCTION</scope>
    <scope>INTERACTION WITH TRAF1 AND TRAF3</scope>
</reference>
<reference key="10">
    <citation type="journal article" date="2000" name="Nature">
        <title>TACI and BCMA are receptors for a TNF homologue implicated in B-cell autoimmune disease.</title>
        <authorList>
            <person name="Gross J.A."/>
            <person name="Johnston J."/>
            <person name="Mudri S."/>
            <person name="Enselman R."/>
            <person name="Dillon S.R."/>
            <person name="Madden K."/>
            <person name="Xu W."/>
            <person name="Parrish-Novak J."/>
            <person name="Foster D."/>
            <person name="Lofton-Day C."/>
            <person name="Moore M."/>
            <person name="Littau A."/>
            <person name="Grossman A."/>
            <person name="Haugen H."/>
            <person name="Foley K."/>
            <person name="Blumberg H."/>
            <person name="Harrison K."/>
            <person name="Kindsvogel W."/>
            <person name="Clegg C.H."/>
        </authorList>
    </citation>
    <scope>FUNCTION</scope>
</reference>
<reference key="11">
    <citation type="journal article" date="2000" name="Nat. Immunol.">
        <title>APRIL and TALL-I and receptors BCMA and TACI: system for regulating humoral immunity.</title>
        <authorList>
            <person name="Yu G."/>
            <person name="Boone T."/>
            <person name="Delaney J."/>
            <person name="Hawkins N."/>
            <person name="Kelley M.J."/>
            <person name="Ramakrishnan M."/>
            <person name="McCabe S."/>
            <person name="Qiu W.R."/>
            <person name="Kornuc M."/>
            <person name="Xia X.-Z."/>
            <person name="Guo J."/>
            <person name="Stolina M."/>
            <person name="Boyle W.J."/>
            <person name="Sarosi I."/>
            <person name="Hsu H."/>
            <person name="Senaldi G."/>
            <person name="Theill L.E."/>
        </authorList>
    </citation>
    <scope>FUNCTION</scope>
    <scope>INTERACTION WITH TNFSF13 AND TNFSF13B</scope>
</reference>
<reference key="12">
    <citation type="journal article" date="2000" name="Proc. Natl. Acad. Sci. U.S.A.">
        <title>B cell maturation protein is a receptor for the tumor necrosis factor family member TALL-1.</title>
        <authorList>
            <person name="Shu H.-B."/>
            <person name="Johnson H."/>
        </authorList>
    </citation>
    <scope>INTERACTION WITH TRAF5 AND TRAF6</scope>
</reference>
<reference key="13">
    <citation type="journal article" date="2003" name="Nature">
        <title>Ligand-receptor binding revealed by the TNF family member TALL-1.</title>
        <authorList>
            <person name="Liu Y."/>
            <person name="Hong X."/>
            <person name="Kappler J."/>
            <person name="Jiang L."/>
            <person name="Zhang R."/>
            <person name="Xu L."/>
            <person name="Pan C.-H."/>
            <person name="Martin W.E."/>
            <person name="Murphy R.C."/>
            <person name="Shu H.-B."/>
            <person name="Dai S."/>
            <person name="Zhang G."/>
        </authorList>
    </citation>
    <scope>X-RAY CRYSTALLOGRAPHY (2.6 ANGSTROMS) OF 8-46 IN COMPLEX WITH TNFSF13B</scope>
    <scope>DISULFIDE BONDS</scope>
</reference>
<reference key="14">
    <citation type="journal article" date="2005" name="J. Biol. Chem.">
        <title>Structures of APRIL-receptor complexes: like BCMA, TACI employs only a single cysteine-rich domain for high affinity ligand binding.</title>
        <authorList>
            <person name="Hymowitz S.G."/>
            <person name="Patel D.R."/>
            <person name="Wallweber H.J."/>
            <person name="Runyon S."/>
            <person name="Yan M."/>
            <person name="Yin J."/>
            <person name="Shriver S.K."/>
            <person name="Gordon N.C."/>
            <person name="Pan B."/>
            <person name="Skelton N.J."/>
            <person name="Kelley R.F."/>
            <person name="Starovasnik M.A."/>
        </authorList>
    </citation>
    <scope>X-RAY CRYSTALLOGRAPHY (2.35 ANGSTROMS) OF 5-51 IN COMPLEX WITH MOUSE TNFSF13B</scope>
    <scope>DISULFIDE BONDS</scope>
</reference>
<proteinExistence type="evidence at protein level"/>
<comment type="function">
    <text evidence="3 4 5">Receptor for TNFSF13B/BLyS/BAFF and TNFSF13/APRIL. Promotes B-cell survival and plays a role in the regulation of humoral immunity. Activates NF-kappa-B and JNK.</text>
</comment>
<comment type="subunit">
    <text evidence="7 9">Associates with TRAF1, TRAF2, TRAF3, TRAF5 and TRAF6.</text>
</comment>
<comment type="interaction">
    <interactant intactId="EBI-519945">
        <id>Q02223</id>
    </interactant>
    <interactant intactId="EBI-2807956">
        <id>Q96FZ5</id>
        <label>CMTM7</label>
    </interactant>
    <organismsDiffer>false</organismsDiffer>
    <experiments>3</experiments>
</comment>
<comment type="interaction">
    <interactant intactId="EBI-519945">
        <id>Q02223</id>
    </interactant>
    <interactant intactId="EBI-981985">
        <id>Q9Y5Y5</id>
        <label>PEX16</label>
    </interactant>
    <organismsDiffer>false</organismsDiffer>
    <experiments>3</experiments>
</comment>
<comment type="interaction">
    <interactant intactId="EBI-519945">
        <id>Q02223</id>
    </interactant>
    <interactant intactId="EBI-1045825">
        <id>P55061</id>
        <label>TMBIM6</label>
    </interactant>
    <organismsDiffer>false</organismsDiffer>
    <experiments>3</experiments>
</comment>
<comment type="subcellular location">
    <subcellularLocation>
        <location>Cell membrane</location>
        <topology>Single-pass type III membrane protein</topology>
    </subcellularLocation>
    <subcellularLocation>
        <location>Endomembrane system</location>
        <topology>Single-pass type III membrane protein</topology>
    </subcellularLocation>
    <text>Perinuclear Golgi-like structures.</text>
</comment>
<comment type="alternative products">
    <event type="alternative splicing"/>
    <isoform>
        <id>Q02223-1</id>
        <name>1</name>
        <sequence type="displayed"/>
    </isoform>
    <isoform>
        <id>Q02223-2</id>
        <name>2</name>
        <name>TV4</name>
        <sequence type="described" ref="VSP_047678"/>
    </isoform>
</comment>
<comment type="tissue specificity">
    <text>Expressed in mature B-cells, but not in T-cells or monocytes.</text>
</comment>
<comment type="disease">
    <text evidence="8">A chromosomal aberration involving TNFRSF17 is found in a form of T-cell acute lymphoblastic leukemia (T-ALL). Translocation t(4;16)(q26;p13) with IL2.</text>
</comment>
<comment type="miscellaneous">
    <molecule>Isoform 2</molecule>
    <text evidence="14">Observed only in some CD19+ cell.</text>
</comment>